<reference key="1">
    <citation type="journal article" date="2004" name="Proc. Natl. Acad. Sci. U.S.A.">
        <title>Genome sequence of the deep-sea gamma-proteobacterium Idiomarina loihiensis reveals amino acid fermentation as a source of carbon and energy.</title>
        <authorList>
            <person name="Hou S."/>
            <person name="Saw J.H."/>
            <person name="Lee K.S."/>
            <person name="Freitas T.A."/>
            <person name="Belisle C."/>
            <person name="Kawarabayasi Y."/>
            <person name="Donachie S.P."/>
            <person name="Pikina A."/>
            <person name="Galperin M.Y."/>
            <person name="Koonin E.V."/>
            <person name="Makarova K.S."/>
            <person name="Omelchenko M.V."/>
            <person name="Sorokin A."/>
            <person name="Wolf Y.I."/>
            <person name="Li Q.X."/>
            <person name="Keum Y.S."/>
            <person name="Campbell S."/>
            <person name="Denery J."/>
            <person name="Aizawa S."/>
            <person name="Shibata S."/>
            <person name="Malahoff A."/>
            <person name="Alam M."/>
        </authorList>
    </citation>
    <scope>NUCLEOTIDE SEQUENCE [LARGE SCALE GENOMIC DNA]</scope>
    <source>
        <strain>ATCC BAA-735 / DSM 15497 / L2-TR</strain>
    </source>
</reference>
<sequence>MTEGNQQKQFDSDSFLRHLTHQPGVYRMYDESGDVIYVGKAKDLRKRVSSYFREKVDRMKTQVLVKQIASMDVTVTNTEAEALILENSFIKKYRPRYNVLLRDDKSYPYIILTSHQHPKLGFHRGARRAKGDYFGPFPNGSAVRESLNLLQKLFPIRQCDDSYYRARTRPCLQYQLKRCLAPCVNVCTDDEYNEQVALAKQFLQGKNQQVIDELMNKMEQASTDLDFERAARFRDQIAALRKTQERNSVTGSQQELDVIGLARGNGMTTVQMLFIRDNHLQGSRSYFPKVPTDTPDDEVLRAFLLQFYLSDTAGRKIPREVVLPVDVQPDNVLAEVMSDALSQPVKLQSSVRGDKRQYQSLAQKNAVNALESRLNQQSTMNRRTQALQQVLEFGVPIQRMECFDISHTMGQQTVASCVVFDQNGPKKSDYRRYNITGITPGDDYAAMSKALAKRYDNAKEQGNIPDILFIDGGKGQLAQAENYFNDWGKEAPVLIGVAKGESRKPGLETLIMAGSHETIPLSKDASALHLIQHIRDESHRFAITGHRQKRAKVKKTSTLEQIDGVGAKRRQAILKNLGGLQEVKNASIDKLASVPGISRSLAEKIYYSFRDE</sequence>
<gene>
    <name evidence="1" type="primary">uvrC</name>
    <name type="ordered locus">IL0653</name>
</gene>
<comment type="function">
    <text evidence="1">The UvrABC repair system catalyzes the recognition and processing of DNA lesions. UvrC both incises the 5' and 3' sides of the lesion. The N-terminal half is responsible for the 3' incision and the C-terminal half is responsible for the 5' incision.</text>
</comment>
<comment type="subunit">
    <text evidence="1">Interacts with UvrB in an incision complex.</text>
</comment>
<comment type="subcellular location">
    <subcellularLocation>
        <location evidence="1">Cytoplasm</location>
    </subcellularLocation>
</comment>
<comment type="similarity">
    <text evidence="1">Belongs to the UvrC family.</text>
</comment>
<evidence type="ECO:0000255" key="1">
    <source>
        <dbReference type="HAMAP-Rule" id="MF_00203"/>
    </source>
</evidence>
<organism>
    <name type="scientific">Idiomarina loihiensis (strain ATCC BAA-735 / DSM 15497 / L2-TR)</name>
    <dbReference type="NCBI Taxonomy" id="283942"/>
    <lineage>
        <taxon>Bacteria</taxon>
        <taxon>Pseudomonadati</taxon>
        <taxon>Pseudomonadota</taxon>
        <taxon>Gammaproteobacteria</taxon>
        <taxon>Alteromonadales</taxon>
        <taxon>Idiomarinaceae</taxon>
        <taxon>Idiomarina</taxon>
    </lineage>
</organism>
<dbReference type="EMBL" id="AE017340">
    <property type="protein sequence ID" value="AAV81494.1"/>
    <property type="molecule type" value="Genomic_DNA"/>
</dbReference>
<dbReference type="RefSeq" id="WP_011233906.1">
    <property type="nucleotide sequence ID" value="NC_006512.1"/>
</dbReference>
<dbReference type="SMR" id="Q5R0A6"/>
<dbReference type="STRING" id="283942.IL0653"/>
<dbReference type="GeneID" id="41335807"/>
<dbReference type="KEGG" id="ilo:IL0653"/>
<dbReference type="eggNOG" id="COG0322">
    <property type="taxonomic scope" value="Bacteria"/>
</dbReference>
<dbReference type="HOGENOM" id="CLU_014841_3_2_6"/>
<dbReference type="OrthoDB" id="9804933at2"/>
<dbReference type="Proteomes" id="UP000001171">
    <property type="component" value="Chromosome"/>
</dbReference>
<dbReference type="GO" id="GO:0005737">
    <property type="term" value="C:cytoplasm"/>
    <property type="evidence" value="ECO:0007669"/>
    <property type="project" value="UniProtKB-SubCell"/>
</dbReference>
<dbReference type="GO" id="GO:0009380">
    <property type="term" value="C:excinuclease repair complex"/>
    <property type="evidence" value="ECO:0007669"/>
    <property type="project" value="InterPro"/>
</dbReference>
<dbReference type="GO" id="GO:0003677">
    <property type="term" value="F:DNA binding"/>
    <property type="evidence" value="ECO:0007669"/>
    <property type="project" value="UniProtKB-UniRule"/>
</dbReference>
<dbReference type="GO" id="GO:0009381">
    <property type="term" value="F:excinuclease ABC activity"/>
    <property type="evidence" value="ECO:0007669"/>
    <property type="project" value="UniProtKB-UniRule"/>
</dbReference>
<dbReference type="GO" id="GO:0006289">
    <property type="term" value="P:nucleotide-excision repair"/>
    <property type="evidence" value="ECO:0007669"/>
    <property type="project" value="UniProtKB-UniRule"/>
</dbReference>
<dbReference type="GO" id="GO:0009432">
    <property type="term" value="P:SOS response"/>
    <property type="evidence" value="ECO:0007669"/>
    <property type="project" value="UniProtKB-UniRule"/>
</dbReference>
<dbReference type="CDD" id="cd10434">
    <property type="entry name" value="GIY-YIG_UvrC_Cho"/>
    <property type="match status" value="1"/>
</dbReference>
<dbReference type="FunFam" id="3.30.420.340:FF:000001">
    <property type="entry name" value="UvrABC system protein C"/>
    <property type="match status" value="1"/>
</dbReference>
<dbReference type="FunFam" id="3.40.1440.10:FF:000001">
    <property type="entry name" value="UvrABC system protein C"/>
    <property type="match status" value="1"/>
</dbReference>
<dbReference type="FunFam" id="4.10.860.10:FF:000002">
    <property type="entry name" value="UvrABC system protein C"/>
    <property type="match status" value="1"/>
</dbReference>
<dbReference type="Gene3D" id="1.10.150.20">
    <property type="entry name" value="5' to 3' exonuclease, C-terminal subdomain"/>
    <property type="match status" value="1"/>
</dbReference>
<dbReference type="Gene3D" id="3.40.1440.10">
    <property type="entry name" value="GIY-YIG endonuclease"/>
    <property type="match status" value="1"/>
</dbReference>
<dbReference type="Gene3D" id="4.10.860.10">
    <property type="entry name" value="UVR domain"/>
    <property type="match status" value="1"/>
</dbReference>
<dbReference type="Gene3D" id="3.30.420.340">
    <property type="entry name" value="UvrC, RNAse H endonuclease domain"/>
    <property type="match status" value="1"/>
</dbReference>
<dbReference type="HAMAP" id="MF_00203">
    <property type="entry name" value="UvrC"/>
    <property type="match status" value="1"/>
</dbReference>
<dbReference type="InterPro" id="IPR000305">
    <property type="entry name" value="GIY-YIG_endonuc"/>
</dbReference>
<dbReference type="InterPro" id="IPR035901">
    <property type="entry name" value="GIY-YIG_endonuc_sf"/>
</dbReference>
<dbReference type="InterPro" id="IPR047296">
    <property type="entry name" value="GIY-YIG_UvrC_Cho"/>
</dbReference>
<dbReference type="InterPro" id="IPR003583">
    <property type="entry name" value="Hlx-hairpin-Hlx_DNA-bd_motif"/>
</dbReference>
<dbReference type="InterPro" id="IPR010994">
    <property type="entry name" value="RuvA_2-like"/>
</dbReference>
<dbReference type="InterPro" id="IPR001943">
    <property type="entry name" value="UVR_dom"/>
</dbReference>
<dbReference type="InterPro" id="IPR036876">
    <property type="entry name" value="UVR_dom_sf"/>
</dbReference>
<dbReference type="InterPro" id="IPR050066">
    <property type="entry name" value="UvrABC_protein_C"/>
</dbReference>
<dbReference type="InterPro" id="IPR004791">
    <property type="entry name" value="UvrC"/>
</dbReference>
<dbReference type="InterPro" id="IPR001162">
    <property type="entry name" value="UvrC_RNase_H_dom"/>
</dbReference>
<dbReference type="InterPro" id="IPR038476">
    <property type="entry name" value="UvrC_RNase_H_dom_sf"/>
</dbReference>
<dbReference type="NCBIfam" id="NF001824">
    <property type="entry name" value="PRK00558.1-5"/>
    <property type="match status" value="1"/>
</dbReference>
<dbReference type="NCBIfam" id="TIGR00194">
    <property type="entry name" value="uvrC"/>
    <property type="match status" value="1"/>
</dbReference>
<dbReference type="PANTHER" id="PTHR30562:SF1">
    <property type="entry name" value="UVRABC SYSTEM PROTEIN C"/>
    <property type="match status" value="1"/>
</dbReference>
<dbReference type="PANTHER" id="PTHR30562">
    <property type="entry name" value="UVRC/OXIDOREDUCTASE"/>
    <property type="match status" value="1"/>
</dbReference>
<dbReference type="Pfam" id="PF01541">
    <property type="entry name" value="GIY-YIG"/>
    <property type="match status" value="1"/>
</dbReference>
<dbReference type="Pfam" id="PF14520">
    <property type="entry name" value="HHH_5"/>
    <property type="match status" value="1"/>
</dbReference>
<dbReference type="Pfam" id="PF02151">
    <property type="entry name" value="UVR"/>
    <property type="match status" value="1"/>
</dbReference>
<dbReference type="Pfam" id="PF22920">
    <property type="entry name" value="UvrC_RNaseH"/>
    <property type="match status" value="1"/>
</dbReference>
<dbReference type="Pfam" id="PF08459">
    <property type="entry name" value="UvrC_RNaseH_dom"/>
    <property type="match status" value="1"/>
</dbReference>
<dbReference type="SMART" id="SM00465">
    <property type="entry name" value="GIYc"/>
    <property type="match status" value="1"/>
</dbReference>
<dbReference type="SMART" id="SM00278">
    <property type="entry name" value="HhH1"/>
    <property type="match status" value="2"/>
</dbReference>
<dbReference type="SUPFAM" id="SSF46600">
    <property type="entry name" value="C-terminal UvrC-binding domain of UvrB"/>
    <property type="match status" value="1"/>
</dbReference>
<dbReference type="SUPFAM" id="SSF82771">
    <property type="entry name" value="GIY-YIG endonuclease"/>
    <property type="match status" value="1"/>
</dbReference>
<dbReference type="SUPFAM" id="SSF47781">
    <property type="entry name" value="RuvA domain 2-like"/>
    <property type="match status" value="1"/>
</dbReference>
<dbReference type="PROSITE" id="PS50164">
    <property type="entry name" value="GIY_YIG"/>
    <property type="match status" value="1"/>
</dbReference>
<dbReference type="PROSITE" id="PS50151">
    <property type="entry name" value="UVR"/>
    <property type="match status" value="1"/>
</dbReference>
<dbReference type="PROSITE" id="PS50165">
    <property type="entry name" value="UVRC"/>
    <property type="match status" value="1"/>
</dbReference>
<feature type="chain" id="PRO_0000227437" description="UvrABC system protein C">
    <location>
        <begin position="1"/>
        <end position="612"/>
    </location>
</feature>
<feature type="domain" description="GIY-YIG" evidence="1">
    <location>
        <begin position="21"/>
        <end position="99"/>
    </location>
</feature>
<feature type="domain" description="UVR" evidence="1">
    <location>
        <begin position="208"/>
        <end position="243"/>
    </location>
</feature>
<name>UVRC_IDILO</name>
<proteinExistence type="inferred from homology"/>
<protein>
    <recommendedName>
        <fullName evidence="1">UvrABC system protein C</fullName>
        <shortName evidence="1">Protein UvrC</shortName>
    </recommendedName>
    <alternativeName>
        <fullName evidence="1">Excinuclease ABC subunit C</fullName>
    </alternativeName>
</protein>
<accession>Q5R0A6</accession>
<keyword id="KW-0963">Cytoplasm</keyword>
<keyword id="KW-0227">DNA damage</keyword>
<keyword id="KW-0228">DNA excision</keyword>
<keyword id="KW-0234">DNA repair</keyword>
<keyword id="KW-0267">Excision nuclease</keyword>
<keyword id="KW-1185">Reference proteome</keyword>
<keyword id="KW-0742">SOS response</keyword>